<feature type="chain" id="PRO_0000185835" description="Glutathione S-transferase Y1">
    <location>
        <begin position="1"/>
        <end position="218"/>
    </location>
</feature>
<feature type="domain" description="GST N-terminal">
    <location>
        <begin position="2"/>
        <end position="88"/>
    </location>
</feature>
<feature type="domain" description="GST C-terminal">
    <location>
        <begin position="90"/>
        <end position="208"/>
    </location>
</feature>
<feature type="binding site" evidence="2">
    <location>
        <begin position="7"/>
        <end position="8"/>
    </location>
    <ligand>
        <name>glutathione</name>
        <dbReference type="ChEBI" id="CHEBI:57925"/>
    </ligand>
</feature>
<feature type="binding site" evidence="2">
    <location>
        <begin position="46"/>
        <end position="50"/>
    </location>
    <ligand>
        <name>glutathione</name>
        <dbReference type="ChEBI" id="CHEBI:57925"/>
    </ligand>
</feature>
<feature type="binding site" evidence="2">
    <location>
        <begin position="59"/>
        <end position="60"/>
    </location>
    <ligand>
        <name>glutathione</name>
        <dbReference type="ChEBI" id="CHEBI:57925"/>
    </ligand>
</feature>
<feature type="binding site" evidence="2">
    <location>
        <begin position="72"/>
        <end position="73"/>
    </location>
    <ligand>
        <name>glutathione</name>
        <dbReference type="ChEBI" id="CHEBI:57925"/>
    </ligand>
</feature>
<feature type="binding site" evidence="1">
    <location>
        <position position="116"/>
    </location>
    <ligand>
        <name>substrate</name>
    </ligand>
</feature>
<reference key="1">
    <citation type="journal article" date="1990" name="Eur. J. Biochem.">
        <title>Coamplification of mu class glutathione S-transferase genes and an adenylate deaminase gene in coformycin-resistant Chinese hamster fibroblasts.</title>
        <authorList>
            <person name="de Saint Vincent B.R."/>
            <person name="Hyrien O."/>
            <person name="Debatisse M."/>
            <person name="Buttin G."/>
        </authorList>
    </citation>
    <scope>NUCLEOTIDE SEQUENCE [MRNA]</scope>
</reference>
<protein>
    <recommendedName>
        <fullName>Glutathione S-transferase Y1</fullName>
        <ecNumber>2.5.1.18</ecNumber>
    </recommendedName>
    <alternativeName>
        <fullName>Chain 3</fullName>
    </alternativeName>
    <alternativeName>
        <fullName>GST class-mu</fullName>
    </alternativeName>
</protein>
<accession>Q00285</accession>
<organism>
    <name type="scientific">Cricetulus longicaudatus</name>
    <name type="common">Long-tailed dwarf hamster</name>
    <dbReference type="NCBI Taxonomy" id="10030"/>
    <lineage>
        <taxon>Eukaryota</taxon>
        <taxon>Metazoa</taxon>
        <taxon>Chordata</taxon>
        <taxon>Craniata</taxon>
        <taxon>Vertebrata</taxon>
        <taxon>Euteleostomi</taxon>
        <taxon>Mammalia</taxon>
        <taxon>Eutheria</taxon>
        <taxon>Euarchontoglires</taxon>
        <taxon>Glires</taxon>
        <taxon>Rodentia</taxon>
        <taxon>Myomorpha</taxon>
        <taxon>Muroidea</taxon>
        <taxon>Cricetidae</taxon>
        <taxon>Cricetinae</taxon>
        <taxon>Cricetulus</taxon>
    </lineage>
</organism>
<proteinExistence type="evidence at transcript level"/>
<name>GSTMU_CRILO</name>
<sequence length="218" mass="25819">MPMILGYWNVRGLTNPIRLLLEYTDSSYEEKKYTMGDAPDSDRSQWLNEKFKLGLDFPNLPYLIDGSHKITQSNAILRYIARKHNLCGETEEERIRVDIVENQAMDTRMQLIMLCYNPDFEKQKPEFLKTIPEKMKMYSEFLGKRPWFAGDKVTLCGFLAYDVLDQYQMFEPKCLDPFPNLKDFLARFEGLKKISAYMKTSRFLRRPIFSKMAQWSNK</sequence>
<comment type="function">
    <text>Conjugation of reduced glutathione to a wide number of exogenous and endogenous hydrophobic electrophiles.</text>
</comment>
<comment type="catalytic activity">
    <reaction>
        <text>RX + glutathione = an S-substituted glutathione + a halide anion + H(+)</text>
        <dbReference type="Rhea" id="RHEA:16437"/>
        <dbReference type="ChEBI" id="CHEBI:15378"/>
        <dbReference type="ChEBI" id="CHEBI:16042"/>
        <dbReference type="ChEBI" id="CHEBI:17792"/>
        <dbReference type="ChEBI" id="CHEBI:57925"/>
        <dbReference type="ChEBI" id="CHEBI:90779"/>
        <dbReference type="EC" id="2.5.1.18"/>
    </reaction>
</comment>
<comment type="subunit">
    <text>Homodimer.</text>
</comment>
<comment type="subcellular location">
    <subcellularLocation>
        <location>Cytoplasm</location>
    </subcellularLocation>
</comment>
<comment type="similarity">
    <text evidence="3">Belongs to the GST superfamily. Mu family.</text>
</comment>
<keyword id="KW-0963">Cytoplasm</keyword>
<keyword id="KW-0808">Transferase</keyword>
<dbReference type="EC" id="2.5.1.18"/>
<dbReference type="EMBL" id="X57489">
    <property type="protein sequence ID" value="CAA40726.1"/>
    <property type="molecule type" value="mRNA"/>
</dbReference>
<dbReference type="SMR" id="Q00285"/>
<dbReference type="GO" id="GO:0005737">
    <property type="term" value="C:cytoplasm"/>
    <property type="evidence" value="ECO:0007669"/>
    <property type="project" value="UniProtKB-SubCell"/>
</dbReference>
<dbReference type="GO" id="GO:0004364">
    <property type="term" value="F:glutathione transferase activity"/>
    <property type="evidence" value="ECO:0007669"/>
    <property type="project" value="UniProtKB-EC"/>
</dbReference>
<dbReference type="GO" id="GO:0006749">
    <property type="term" value="P:glutathione metabolic process"/>
    <property type="evidence" value="ECO:0007669"/>
    <property type="project" value="TreeGrafter"/>
</dbReference>
<dbReference type="CDD" id="cd03209">
    <property type="entry name" value="GST_C_Mu"/>
    <property type="match status" value="1"/>
</dbReference>
<dbReference type="CDD" id="cd03075">
    <property type="entry name" value="GST_N_Mu"/>
    <property type="match status" value="1"/>
</dbReference>
<dbReference type="FunFam" id="1.20.1050.10:FF:000083">
    <property type="entry name" value="Glutathione S-transferase Mu 1"/>
    <property type="match status" value="1"/>
</dbReference>
<dbReference type="FunFam" id="3.40.30.10:FF:000603">
    <property type="entry name" value="Glutathione S-transferase Mu 1"/>
    <property type="match status" value="1"/>
</dbReference>
<dbReference type="Gene3D" id="1.20.1050.10">
    <property type="match status" value="1"/>
</dbReference>
<dbReference type="Gene3D" id="3.40.30.10">
    <property type="entry name" value="Glutaredoxin"/>
    <property type="match status" value="1"/>
</dbReference>
<dbReference type="InterPro" id="IPR010987">
    <property type="entry name" value="Glutathione-S-Trfase_C-like"/>
</dbReference>
<dbReference type="InterPro" id="IPR036282">
    <property type="entry name" value="Glutathione-S-Trfase_C_sf"/>
</dbReference>
<dbReference type="InterPro" id="IPR004045">
    <property type="entry name" value="Glutathione_S-Trfase_N"/>
</dbReference>
<dbReference type="InterPro" id="IPR004046">
    <property type="entry name" value="GST_C"/>
</dbReference>
<dbReference type="InterPro" id="IPR003081">
    <property type="entry name" value="GST_mu"/>
</dbReference>
<dbReference type="InterPro" id="IPR050213">
    <property type="entry name" value="GST_superfamily"/>
</dbReference>
<dbReference type="InterPro" id="IPR036249">
    <property type="entry name" value="Thioredoxin-like_sf"/>
</dbReference>
<dbReference type="PANTHER" id="PTHR11571">
    <property type="entry name" value="GLUTATHIONE S-TRANSFERASE"/>
    <property type="match status" value="1"/>
</dbReference>
<dbReference type="PANTHER" id="PTHR11571:SF126">
    <property type="entry name" value="GLUTATHIONE S-TRANSFERASE MU 1-RELATED"/>
    <property type="match status" value="1"/>
</dbReference>
<dbReference type="Pfam" id="PF00043">
    <property type="entry name" value="GST_C"/>
    <property type="match status" value="1"/>
</dbReference>
<dbReference type="Pfam" id="PF02798">
    <property type="entry name" value="GST_N"/>
    <property type="match status" value="1"/>
</dbReference>
<dbReference type="PRINTS" id="PR01267">
    <property type="entry name" value="GSTRNSFRASEM"/>
</dbReference>
<dbReference type="SFLD" id="SFLDG01205">
    <property type="entry name" value="AMPS.1"/>
    <property type="match status" value="1"/>
</dbReference>
<dbReference type="SFLD" id="SFLDG00363">
    <property type="entry name" value="AMPS_(cytGST):_Alpha-__Mu-__Pi"/>
    <property type="match status" value="1"/>
</dbReference>
<dbReference type="SUPFAM" id="SSF47616">
    <property type="entry name" value="GST C-terminal domain-like"/>
    <property type="match status" value="1"/>
</dbReference>
<dbReference type="SUPFAM" id="SSF52833">
    <property type="entry name" value="Thioredoxin-like"/>
    <property type="match status" value="1"/>
</dbReference>
<dbReference type="PROSITE" id="PS50405">
    <property type="entry name" value="GST_CTER"/>
    <property type="match status" value="1"/>
</dbReference>
<dbReference type="PROSITE" id="PS50404">
    <property type="entry name" value="GST_NTER"/>
    <property type="match status" value="1"/>
</dbReference>
<evidence type="ECO:0000250" key="1"/>
<evidence type="ECO:0000250" key="2">
    <source>
        <dbReference type="UniProtKB" id="P08515"/>
    </source>
</evidence>
<evidence type="ECO:0000305" key="3"/>